<keyword id="KW-0496">Mitochondrion</keyword>
<keyword id="KW-0687">Ribonucleoprotein</keyword>
<keyword id="KW-0689">Ribosomal protein</keyword>
<accession>P46759</accession>
<gene>
    <name type="primary">RPS12</name>
</gene>
<reference key="1">
    <citation type="journal article" date="1995" name="J. Mol. Biol.">
        <title>The mitochondrial DNA of the amoeboid protozoon, Acanthamoeba castellanii: complete sequence, gene content and genome organization.</title>
        <authorList>
            <person name="Burger G."/>
            <person name="Plante I."/>
            <person name="Lonergan K.M."/>
            <person name="Gray M.W."/>
        </authorList>
    </citation>
    <scope>NUCLEOTIDE SEQUENCE [GENOMIC DNA]</scope>
    <source>
        <strain>ATCC 30010 / Neff</strain>
    </source>
</reference>
<evidence type="ECO:0000305" key="1"/>
<protein>
    <recommendedName>
        <fullName evidence="1">Small ribosomal subunit protein uS12m</fullName>
    </recommendedName>
    <alternativeName>
        <fullName>Ribosomal protein S12, mitochondrial</fullName>
    </alternativeName>
</protein>
<name>RT12_ACACA</name>
<geneLocation type="mitochondrion"/>
<feature type="chain" id="PRO_0000146451" description="Small ribosomal subunit protein uS12m">
    <location>
        <begin position="1"/>
        <end position="127"/>
    </location>
</feature>
<proteinExistence type="inferred from homology"/>
<dbReference type="EMBL" id="U12386">
    <property type="protein sequence ID" value="AAD11837.1"/>
    <property type="molecule type" value="Genomic_DNA"/>
</dbReference>
<dbReference type="PIR" id="S53845">
    <property type="entry name" value="S53845"/>
</dbReference>
<dbReference type="RefSeq" id="NP_042544.1">
    <property type="nucleotide sequence ID" value="NC_001637.1"/>
</dbReference>
<dbReference type="SMR" id="P46759"/>
<dbReference type="GeneID" id="1734041"/>
<dbReference type="GO" id="GO:0005739">
    <property type="term" value="C:mitochondrion"/>
    <property type="evidence" value="ECO:0007669"/>
    <property type="project" value="UniProtKB-SubCell"/>
</dbReference>
<dbReference type="GO" id="GO:0015935">
    <property type="term" value="C:small ribosomal subunit"/>
    <property type="evidence" value="ECO:0007669"/>
    <property type="project" value="InterPro"/>
</dbReference>
<dbReference type="GO" id="GO:0003735">
    <property type="term" value="F:structural constituent of ribosome"/>
    <property type="evidence" value="ECO:0007669"/>
    <property type="project" value="InterPro"/>
</dbReference>
<dbReference type="GO" id="GO:0006412">
    <property type="term" value="P:translation"/>
    <property type="evidence" value="ECO:0007669"/>
    <property type="project" value="InterPro"/>
</dbReference>
<dbReference type="CDD" id="cd03368">
    <property type="entry name" value="Ribosomal_S12"/>
    <property type="match status" value="1"/>
</dbReference>
<dbReference type="FunFam" id="2.40.50.140:FF:000099">
    <property type="entry name" value="Ribosomal protein S12, mitochondrial"/>
    <property type="match status" value="1"/>
</dbReference>
<dbReference type="Gene3D" id="2.40.50.140">
    <property type="entry name" value="Nucleic acid-binding proteins"/>
    <property type="match status" value="1"/>
</dbReference>
<dbReference type="InterPro" id="IPR012340">
    <property type="entry name" value="NA-bd_OB-fold"/>
</dbReference>
<dbReference type="InterPro" id="IPR006032">
    <property type="entry name" value="Ribosomal_uS12"/>
</dbReference>
<dbReference type="InterPro" id="IPR005679">
    <property type="entry name" value="Ribosomal_uS12_bac"/>
</dbReference>
<dbReference type="NCBIfam" id="TIGR00981">
    <property type="entry name" value="rpsL_bact"/>
    <property type="match status" value="1"/>
</dbReference>
<dbReference type="PANTHER" id="PTHR11652">
    <property type="entry name" value="30S RIBOSOMAL PROTEIN S12 FAMILY MEMBER"/>
    <property type="match status" value="1"/>
</dbReference>
<dbReference type="Pfam" id="PF00164">
    <property type="entry name" value="Ribosom_S12_S23"/>
    <property type="match status" value="1"/>
</dbReference>
<dbReference type="PIRSF" id="PIRSF002133">
    <property type="entry name" value="Ribosomal_S12/S23"/>
    <property type="match status" value="1"/>
</dbReference>
<dbReference type="PRINTS" id="PR01034">
    <property type="entry name" value="RIBOSOMALS12"/>
</dbReference>
<dbReference type="SUPFAM" id="SSF50249">
    <property type="entry name" value="Nucleic acid-binding proteins"/>
    <property type="match status" value="1"/>
</dbReference>
<dbReference type="PROSITE" id="PS00055">
    <property type="entry name" value="RIBOSOMAL_S12"/>
    <property type="match status" value="1"/>
</dbReference>
<organism>
    <name type="scientific">Acanthamoeba castellanii</name>
    <name type="common">Amoeba</name>
    <dbReference type="NCBI Taxonomy" id="5755"/>
    <lineage>
        <taxon>Eukaryota</taxon>
        <taxon>Amoebozoa</taxon>
        <taxon>Discosea</taxon>
        <taxon>Longamoebia</taxon>
        <taxon>Centramoebida</taxon>
        <taxon>Acanthamoebidae</taxon>
        <taxon>Acanthamoeba</taxon>
    </lineage>
</organism>
<sequence length="127" mass="14677">MPTYHQILKNPRRKKMHTNNVKALEGCPQKKGVCVKLRIVKPKKPNSAQRKVAKLRLSTRRMIIAYIPGQGHNLQEYSSVLVSGGRAPDLPGVRYTLIKGKYDFSWKESFERKKKLSKYGYSTKKKF</sequence>
<comment type="subcellular location">
    <subcellularLocation>
        <location>Mitochondrion</location>
    </subcellularLocation>
</comment>
<comment type="similarity">
    <text evidence="1">Belongs to the universal ribosomal protein uS12 family.</text>
</comment>